<feature type="chain" id="PRO_0000454526" description="Cytochrome P450 monooxygenase ffsD">
    <location>
        <begin position="1"/>
        <end position="531"/>
    </location>
</feature>
<feature type="transmembrane region" description="Helical" evidence="3">
    <location>
        <begin position="40"/>
        <end position="60"/>
    </location>
</feature>
<feature type="binding site" description="axial binding residue" evidence="1">
    <location>
        <position position="475"/>
    </location>
    <ligand>
        <name>heme</name>
        <dbReference type="ChEBI" id="CHEBI:30413"/>
    </ligand>
    <ligandPart>
        <name>Fe</name>
        <dbReference type="ChEBI" id="CHEBI:18248"/>
    </ligandPart>
</feature>
<keyword id="KW-0349">Heme</keyword>
<keyword id="KW-0408">Iron</keyword>
<keyword id="KW-0472">Membrane</keyword>
<keyword id="KW-0479">Metal-binding</keyword>
<keyword id="KW-0503">Monooxygenase</keyword>
<keyword id="KW-0560">Oxidoreductase</keyword>
<keyword id="KW-0812">Transmembrane</keyword>
<keyword id="KW-1133">Transmembrane helix</keyword>
<accession>A0A7L8UVC5</accession>
<comment type="function">
    <text evidence="2 4 7">Cytochrome P450 monooxygenase; part of the gene cluster that mediates the biosynthesis of the cytotoxic leucine-containing cytochalasans, including aspochalasin C, aspochalasin E, TMC-169, flavichalasine F, aspergillin PZ, aspochalasin M and flavichalasine G (PubMed:32913332). The first step in the pathway is catalyzed by the hybrid PKS-NRPS ffsA that utilizes 8 units of malonyl-CoA to iteratively assemble the octaketide chain before addition of L-leucine by the C-terminal NRPS modules (PubMed:32913332). Because ffsA lacks a designated enoylreductase (ER) domain, the required activity is provided the enoyl reductase fssC (Probable). The methyltransferase (MT) domain of ffsA catalyzes the alpha-methylation at C10 and C14 using S-adenosyl-L-methionine as the methyl-donating cosubstrate (Probable). Reduction by the hydrolyase ffsE, followed by dehydration and intra-molecular Diels-Alder cyclization by the Diels-Alderase ffsF then yield the required isoindolone-fused macrocycle (By similarity). A number of oxidative steps catalyzed by the tailoring cytochrome P450 monooxygenase ffsD, the FAD-linked oxidoreductase ffsJ and the short-chain dehydrogenase/reductase ffsI, are further required to afford the final products (Probable).</text>
</comment>
<comment type="cofactor">
    <cofactor evidence="1">
        <name>heme</name>
        <dbReference type="ChEBI" id="CHEBI:30413"/>
    </cofactor>
</comment>
<comment type="pathway">
    <text evidence="7">Mycotoxin biosynthesis.</text>
</comment>
<comment type="subcellular location">
    <subcellularLocation>
        <location evidence="3">Membrane</location>
        <topology evidence="3">Single-pass membrane protein</topology>
    </subcellularLocation>
</comment>
<comment type="similarity">
    <text evidence="6">Belongs to the cytochrome P450 family.</text>
</comment>
<name>FFSD_ASPFV</name>
<gene>
    <name evidence="5" type="primary">ffsD</name>
</gene>
<sequence>MLQDIVEQWQIMQQALAPLRLTRWQLTKMFAAQVYRDHPVGALLGISLSVVLLLWVISVVTRPKKLEDVLGLPVLGGSRTLKSDFLRIIEEGKQRYPDTPYIVNASGLQYVVYPPIFFDEIKRLTEQEASAQDFFHTVTYGQWTHIGAETDALWKTIAVDLARSVPVKVPSKQKDARIAFDKYVGYCPESKPVTIFDTMMKIVATTNACSFVGREVGTGEWPQVVQQLPMSVYFAVMTLSIVPRIFRPVLLPIVLIPALLVQRKMRKILAPGIRQDMEEYERAADRKELLKPTEDGKLPFTQWLMARYKPGEATAHQLATDHLLTSFESTVSTAATLYNMILDLAVRPELQDELRQEVEEIMVDGKLPATHLKELKKMDSMMRETFRVNPFALFSLYRITRKPIQLSSGPKLPAGTILCVDSHHINNSAELFPEPAKFDPYRFLKKREEPGAENRFQFVSTGPTDPNWGDGTQACPGRFFANSTLKVCLAHVLLKYNVSLREGQERPKMVSMPNGIWAPDMAAQVLFQSRD</sequence>
<reference key="1">
    <citation type="journal article" date="2020" name="J. Antibiot.">
        <title>Discovery and characterization of a cytochalasan biosynthetic cluster from the marine-derived fungus Aspergillus flavipes CNL-338.</title>
        <authorList>
            <person name="Heard S.C."/>
            <person name="Wu G."/>
            <person name="Winter J.M."/>
        </authorList>
    </citation>
    <scope>NUCLEOTIDE SEQUENCE [GENOMIC DNA]</scope>
    <scope>FUNCTION</scope>
    <scope>PATHWAY</scope>
    <source>
        <strain>CNL-338</strain>
    </source>
</reference>
<protein>
    <recommendedName>
        <fullName evidence="5">Cytochrome P450 monooxygenase ffsD</fullName>
        <ecNumber evidence="7">1.-.-.-</ecNumber>
    </recommendedName>
    <alternativeName>
        <fullName evidence="5">Cytochalasans biosynthesis cluster protein ffsD</fullName>
    </alternativeName>
</protein>
<proteinExistence type="inferred from homology"/>
<organism>
    <name type="scientific">Aspergillus flavipes</name>
    <dbReference type="NCBI Taxonomy" id="41900"/>
    <lineage>
        <taxon>Eukaryota</taxon>
        <taxon>Fungi</taxon>
        <taxon>Dikarya</taxon>
        <taxon>Ascomycota</taxon>
        <taxon>Pezizomycotina</taxon>
        <taxon>Eurotiomycetes</taxon>
        <taxon>Eurotiomycetidae</taxon>
        <taxon>Eurotiales</taxon>
        <taxon>Aspergillaceae</taxon>
        <taxon>Aspergillus</taxon>
        <taxon>Aspergillus subgen. Circumdati</taxon>
    </lineage>
</organism>
<evidence type="ECO:0000250" key="1">
    <source>
        <dbReference type="UniProtKB" id="P04798"/>
    </source>
</evidence>
<evidence type="ECO:0000250" key="2">
    <source>
        <dbReference type="UniProtKB" id="Q0V6Q8"/>
    </source>
</evidence>
<evidence type="ECO:0000255" key="3"/>
<evidence type="ECO:0000269" key="4">
    <source>
    </source>
</evidence>
<evidence type="ECO:0000303" key="5">
    <source>
    </source>
</evidence>
<evidence type="ECO:0000305" key="6"/>
<evidence type="ECO:0000305" key="7">
    <source>
    </source>
</evidence>
<dbReference type="EC" id="1.-.-.-" evidence="7"/>
<dbReference type="EMBL" id="MT586757">
    <property type="protein sequence ID" value="QOG08943.1"/>
    <property type="molecule type" value="Genomic_DNA"/>
</dbReference>
<dbReference type="SMR" id="A0A7L8UVC5"/>
<dbReference type="GO" id="GO:0016020">
    <property type="term" value="C:membrane"/>
    <property type="evidence" value="ECO:0007669"/>
    <property type="project" value="UniProtKB-SubCell"/>
</dbReference>
<dbReference type="GO" id="GO:0020037">
    <property type="term" value="F:heme binding"/>
    <property type="evidence" value="ECO:0007669"/>
    <property type="project" value="InterPro"/>
</dbReference>
<dbReference type="GO" id="GO:0005506">
    <property type="term" value="F:iron ion binding"/>
    <property type="evidence" value="ECO:0007669"/>
    <property type="project" value="InterPro"/>
</dbReference>
<dbReference type="GO" id="GO:0016712">
    <property type="term" value="F:oxidoreductase activity, acting on paired donors, with incorporation or reduction of molecular oxygen, reduced flavin or flavoprotein as one donor, and incorporation of one atom of oxygen"/>
    <property type="evidence" value="ECO:0007669"/>
    <property type="project" value="UniProtKB-EC"/>
</dbReference>
<dbReference type="GO" id="GO:0019748">
    <property type="term" value="P:secondary metabolic process"/>
    <property type="evidence" value="ECO:0007669"/>
    <property type="project" value="UniProtKB-ARBA"/>
</dbReference>
<dbReference type="CDD" id="cd11041">
    <property type="entry name" value="CYP503A1-like"/>
    <property type="match status" value="1"/>
</dbReference>
<dbReference type="Gene3D" id="1.10.630.10">
    <property type="entry name" value="Cytochrome P450"/>
    <property type="match status" value="1"/>
</dbReference>
<dbReference type="InterPro" id="IPR001128">
    <property type="entry name" value="Cyt_P450"/>
</dbReference>
<dbReference type="InterPro" id="IPR002403">
    <property type="entry name" value="Cyt_P450_E_grp-IV"/>
</dbReference>
<dbReference type="InterPro" id="IPR036396">
    <property type="entry name" value="Cyt_P450_sf"/>
</dbReference>
<dbReference type="PANTHER" id="PTHR46206">
    <property type="entry name" value="CYTOCHROME P450"/>
    <property type="match status" value="1"/>
</dbReference>
<dbReference type="PANTHER" id="PTHR46206:SF6">
    <property type="entry name" value="CYTOCHROME P450 MONOOXYGENASE AN1598-RELATED"/>
    <property type="match status" value="1"/>
</dbReference>
<dbReference type="Pfam" id="PF00067">
    <property type="entry name" value="p450"/>
    <property type="match status" value="1"/>
</dbReference>
<dbReference type="PRINTS" id="PR00465">
    <property type="entry name" value="EP450IV"/>
</dbReference>
<dbReference type="SUPFAM" id="SSF48264">
    <property type="entry name" value="Cytochrome P450"/>
    <property type="match status" value="1"/>
</dbReference>